<sequence length="140" mass="15562">MPSQRSPTKRSPTKRSPQKGAGKGGKGSKRGGKARRRGGAAVRRRRRRRESYGIYIYKVLKQVHPDTGISSRGMSIMNSFVNDVFERVAAEASRLTKYNRRSTVSSREIQTAVRLLLPGELAKHAVSEGTKAVTKYTTSR</sequence>
<evidence type="ECO:0000250" key="1"/>
<evidence type="ECO:0000256" key="2">
    <source>
        <dbReference type="SAM" id="MobiDB-lite"/>
    </source>
</evidence>
<evidence type="ECO:0000305" key="3"/>
<keyword id="KW-0158">Chromosome</keyword>
<keyword id="KW-0238">DNA-binding</keyword>
<keyword id="KW-0325">Glycoprotein</keyword>
<keyword id="KW-1017">Isopeptide bond</keyword>
<keyword id="KW-0544">Nucleosome core</keyword>
<keyword id="KW-0539">Nucleus</keyword>
<keyword id="KW-0597">Phosphoprotein</keyword>
<keyword id="KW-1185">Reference proteome</keyword>
<keyword id="KW-0832">Ubl conjugation</keyword>
<organism>
    <name type="scientific">Strongylocentrotus purpuratus</name>
    <name type="common">Purple sea urchin</name>
    <dbReference type="NCBI Taxonomy" id="7668"/>
    <lineage>
        <taxon>Eukaryota</taxon>
        <taxon>Metazoa</taxon>
        <taxon>Echinodermata</taxon>
        <taxon>Eleutherozoa</taxon>
        <taxon>Echinozoa</taxon>
        <taxon>Echinoidea</taxon>
        <taxon>Euechinoidea</taxon>
        <taxon>Echinacea</taxon>
        <taxon>Camarodonta</taxon>
        <taxon>Echinidea</taxon>
        <taxon>Strongylocentrotidae</taxon>
        <taxon>Strongylocentrotus</taxon>
    </lineage>
</organism>
<comment type="function">
    <text>Core component of nucleosome. Nucleosomes wrap and compact DNA into chromatin, limiting DNA accessibility to the cellular machineries which require DNA as a template. Histones thereby play a central role in transcription regulation, DNA repair, DNA replication and chromosomal stability. DNA accessibility is regulated via a complex set of post-translational modifications of histones, also called histone code, and nucleosome remodeling.</text>
</comment>
<comment type="subunit">
    <text>The nucleosome is a histone octamer containing two molecules each of H2A, H2B, H3 and H4 assembled in one H3-H4 heterotetramer and two H2A-H2B heterodimers. The octamer wraps approximately 147 bp of DNA.</text>
</comment>
<comment type="subcellular location">
    <subcellularLocation>
        <location>Nucleus</location>
    </subcellularLocation>
    <subcellularLocation>
        <location>Chromosome</location>
    </subcellularLocation>
</comment>
<comment type="domain">
    <text>Contains 3 SPKK motifs which may interact with the minor groove of A/T-rich DNA sites. Phosphorylation of this motif may regulate DNA binding. This motif is reiterated in both termini of histone H1 and in the C-terminus of plant H2A, but its presence in the N-terminus seems to be unique to sea urchin histones H2B.</text>
</comment>
<comment type="PTM">
    <text evidence="1">Monoubiquitination of Lys-135 gives a specific tag for epigenetic transcriptional activation and is also prerequisite for histone H3 'Lys-4' and 'Lys-79' methylation.</text>
</comment>
<comment type="PTM">
    <text evidence="1">Phosphorylated on SPKK motifs 2 and 3; which may regulate DNA binding. Dephosphorylated during maturation of spermatids to mature sperm and rephosphorylated at fertilization (By similarity).</text>
</comment>
<comment type="PTM">
    <text evidence="1">GlcNAcylation at Ser-127 promotes monoubiquitination of Lys-135. It fluctuates in response to extracellular glucose, and associates with transcribed genes (By similarity).</text>
</comment>
<comment type="similarity">
    <text evidence="3">Belongs to the histone H2B family.</text>
</comment>
<proteinExistence type="inferred from homology"/>
<feature type="initiator methionine" description="Removed" evidence="1">
    <location>
        <position position="1"/>
    </location>
</feature>
<feature type="chain" id="PRO_0000071896" description="Histone H2B.1, sperm">
    <location>
        <begin position="2"/>
        <end position="140"/>
    </location>
</feature>
<feature type="region of interest" description="Disordered" evidence="2">
    <location>
        <begin position="1"/>
        <end position="47"/>
    </location>
</feature>
<feature type="short sequence motif" description="SPKK motif 1">
    <location>
        <begin position="6"/>
        <end position="9"/>
    </location>
</feature>
<feature type="short sequence motif" description="SPKK motif 2">
    <location>
        <begin position="11"/>
        <end position="14"/>
    </location>
</feature>
<feature type="short sequence motif" description="SPKK motif 3">
    <location>
        <begin position="16"/>
        <end position="19"/>
    </location>
</feature>
<feature type="compositionally biased region" description="Basic residues" evidence="2">
    <location>
        <begin position="7"/>
        <end position="17"/>
    </location>
</feature>
<feature type="compositionally biased region" description="Basic residues" evidence="2">
    <location>
        <begin position="26"/>
        <end position="47"/>
    </location>
</feature>
<feature type="modified residue" description="Phosphoserine" evidence="1">
    <location>
        <position position="11"/>
    </location>
</feature>
<feature type="modified residue" description="Phosphoserine" evidence="1">
    <location>
        <position position="16"/>
    </location>
</feature>
<feature type="glycosylation site" description="O-linked (GlcNAc) serine" evidence="1">
    <location>
        <position position="127"/>
    </location>
</feature>
<feature type="cross-link" description="Glycyl lysine isopeptide (Lys-Gly) (interchain with G-Cter in ubiquitin)" evidence="1">
    <location>
        <position position="135"/>
    </location>
</feature>
<accession>P06145</accession>
<name>H2BS1_STRPU</name>
<reference key="1">
    <citation type="journal article" date="1986" name="Nucleic Acids Res.">
        <title>The nucleotide sequence of the gene encoding the sperm specific histone subtype H2B-1 from the sea urchin Strongylocentrotus purpuratus.</title>
        <authorList>
            <person name="Lai Z.-C."/>
            <person name="Lieber T."/>
            <person name="Childs G.J."/>
        </authorList>
    </citation>
    <scope>NUCLEOTIDE SEQUENCE [GENOMIC DNA]</scope>
    <source>
        <tissue>Sperm</tissue>
    </source>
</reference>
<dbReference type="EMBL" id="X04681">
    <property type="protein sequence ID" value="CAA28385.1"/>
    <property type="molecule type" value="Genomic_DNA"/>
</dbReference>
<dbReference type="EMBL" id="X04681">
    <property type="protein sequence ID" value="CAA28384.1"/>
    <property type="molecule type" value="Genomic_DNA"/>
</dbReference>
<dbReference type="PIR" id="S07376">
    <property type="entry name" value="HSURBS"/>
</dbReference>
<dbReference type="RefSeq" id="NP_999706.1">
    <property type="nucleotide sequence ID" value="NM_214541.1"/>
</dbReference>
<dbReference type="SMR" id="P06145"/>
<dbReference type="STRING" id="7668.P06145"/>
<dbReference type="iPTMnet" id="P06145"/>
<dbReference type="EnsemblMetazoa" id="NM_214541">
    <property type="protein sequence ID" value="NP_999706"/>
    <property type="gene ID" value="GeneID_373323"/>
</dbReference>
<dbReference type="GeneID" id="373323"/>
<dbReference type="KEGG" id="spu:373323"/>
<dbReference type="CTD" id="373323"/>
<dbReference type="eggNOG" id="KOG1744">
    <property type="taxonomic scope" value="Eukaryota"/>
</dbReference>
<dbReference type="HOGENOM" id="CLU_075666_2_1_1"/>
<dbReference type="InParanoid" id="P06145"/>
<dbReference type="OMA" id="CFAVRER"/>
<dbReference type="PhylomeDB" id="P06145"/>
<dbReference type="Proteomes" id="UP000007110">
    <property type="component" value="Unassembled WGS sequence"/>
</dbReference>
<dbReference type="GO" id="GO:0000786">
    <property type="term" value="C:nucleosome"/>
    <property type="evidence" value="ECO:0007669"/>
    <property type="project" value="UniProtKB-KW"/>
</dbReference>
<dbReference type="GO" id="GO:0005634">
    <property type="term" value="C:nucleus"/>
    <property type="evidence" value="ECO:0007669"/>
    <property type="project" value="UniProtKB-SubCell"/>
</dbReference>
<dbReference type="GO" id="GO:0003677">
    <property type="term" value="F:DNA binding"/>
    <property type="evidence" value="ECO:0007669"/>
    <property type="project" value="UniProtKB-KW"/>
</dbReference>
<dbReference type="GO" id="GO:0046982">
    <property type="term" value="F:protein heterodimerization activity"/>
    <property type="evidence" value="ECO:0007669"/>
    <property type="project" value="InterPro"/>
</dbReference>
<dbReference type="GO" id="GO:0030527">
    <property type="term" value="F:structural constituent of chromatin"/>
    <property type="evidence" value="ECO:0007669"/>
    <property type="project" value="InterPro"/>
</dbReference>
<dbReference type="CDD" id="cd22910">
    <property type="entry name" value="HFD_H2B"/>
    <property type="match status" value="1"/>
</dbReference>
<dbReference type="FunFam" id="1.10.20.10:FF:000016">
    <property type="entry name" value="Histone H2B"/>
    <property type="match status" value="1"/>
</dbReference>
<dbReference type="Gene3D" id="1.10.20.10">
    <property type="entry name" value="Histone, subunit A"/>
    <property type="match status" value="1"/>
</dbReference>
<dbReference type="InterPro" id="IPR009072">
    <property type="entry name" value="Histone-fold"/>
</dbReference>
<dbReference type="InterPro" id="IPR007125">
    <property type="entry name" value="Histone_H2A/H2B/H3"/>
</dbReference>
<dbReference type="InterPro" id="IPR000558">
    <property type="entry name" value="Histone_H2B"/>
</dbReference>
<dbReference type="InterPro" id="IPR055333">
    <property type="entry name" value="HISTONE_H2B_site"/>
</dbReference>
<dbReference type="PANTHER" id="PTHR23428">
    <property type="entry name" value="HISTONE H2B"/>
    <property type="match status" value="1"/>
</dbReference>
<dbReference type="Pfam" id="PF00125">
    <property type="entry name" value="Histone"/>
    <property type="match status" value="1"/>
</dbReference>
<dbReference type="PRINTS" id="PR00621">
    <property type="entry name" value="HISTONEH2B"/>
</dbReference>
<dbReference type="SMART" id="SM00427">
    <property type="entry name" value="H2B"/>
    <property type="match status" value="1"/>
</dbReference>
<dbReference type="SUPFAM" id="SSF47113">
    <property type="entry name" value="Histone-fold"/>
    <property type="match status" value="1"/>
</dbReference>
<dbReference type="PROSITE" id="PS00357">
    <property type="entry name" value="HISTONE_H2B"/>
    <property type="match status" value="1"/>
</dbReference>
<protein>
    <recommendedName>
        <fullName>Histone H2B.1, sperm</fullName>
    </recommendedName>
</protein>